<organism>
    <name type="scientific">Polaromonas naphthalenivorans (strain CJ2)</name>
    <dbReference type="NCBI Taxonomy" id="365044"/>
    <lineage>
        <taxon>Bacteria</taxon>
        <taxon>Pseudomonadati</taxon>
        <taxon>Pseudomonadota</taxon>
        <taxon>Betaproteobacteria</taxon>
        <taxon>Burkholderiales</taxon>
        <taxon>Comamonadaceae</taxon>
        <taxon>Polaromonas</taxon>
    </lineage>
</organism>
<reference key="1">
    <citation type="journal article" date="2009" name="Environ. Microbiol.">
        <title>The genome of Polaromonas naphthalenivorans strain CJ2, isolated from coal tar-contaminated sediment, reveals physiological and metabolic versatility and evolution through extensive horizontal gene transfer.</title>
        <authorList>
            <person name="Yagi J.M."/>
            <person name="Sims D."/>
            <person name="Brettin T."/>
            <person name="Bruce D."/>
            <person name="Madsen E.L."/>
        </authorList>
    </citation>
    <scope>NUCLEOTIDE SEQUENCE [LARGE SCALE GENOMIC DNA]</scope>
    <source>
        <strain>CJ2</strain>
    </source>
</reference>
<comment type="function">
    <text evidence="1">Catalyzes the transfer of a ribosyl phosphate group from 5-phosphoribose 1-diphosphate to orotate, leading to the formation of orotidine monophosphate (OMP).</text>
</comment>
<comment type="catalytic activity">
    <reaction evidence="1">
        <text>orotidine 5'-phosphate + diphosphate = orotate + 5-phospho-alpha-D-ribose 1-diphosphate</text>
        <dbReference type="Rhea" id="RHEA:10380"/>
        <dbReference type="ChEBI" id="CHEBI:30839"/>
        <dbReference type="ChEBI" id="CHEBI:33019"/>
        <dbReference type="ChEBI" id="CHEBI:57538"/>
        <dbReference type="ChEBI" id="CHEBI:58017"/>
        <dbReference type="EC" id="2.4.2.10"/>
    </reaction>
</comment>
<comment type="cofactor">
    <cofactor evidence="1">
        <name>Mg(2+)</name>
        <dbReference type="ChEBI" id="CHEBI:18420"/>
    </cofactor>
</comment>
<comment type="pathway">
    <text evidence="1">Pyrimidine metabolism; UMP biosynthesis via de novo pathway; UMP from orotate: step 1/2.</text>
</comment>
<comment type="subunit">
    <text evidence="1">Homodimer.</text>
</comment>
<comment type="similarity">
    <text evidence="1">Belongs to the purine/pyrimidine phosphoribosyltransferase family. PyrE subfamily.</text>
</comment>
<gene>
    <name evidence="1" type="primary">pyrE</name>
    <name type="ordered locus">Pnap_0168</name>
</gene>
<keyword id="KW-0328">Glycosyltransferase</keyword>
<keyword id="KW-0460">Magnesium</keyword>
<keyword id="KW-0665">Pyrimidine biosynthesis</keyword>
<keyword id="KW-1185">Reference proteome</keyword>
<keyword id="KW-0808">Transferase</keyword>
<accession>A1VIL5</accession>
<protein>
    <recommendedName>
        <fullName evidence="1">Orotate phosphoribosyltransferase</fullName>
        <shortName evidence="1">OPRT</shortName>
        <shortName evidence="1">OPRTase</shortName>
        <ecNumber evidence="1">2.4.2.10</ecNumber>
    </recommendedName>
</protein>
<sequence>MPAEGSLAQEFVQFAVESGVLRFGQFKTKAGRMSPYFFNAGLFDDGAKLGRLAQFYARQLLAEEQRSGLAFDMIFGPAYKGIPLAAAVAIELARLGRNLPFAYNRKEAKDHGEGGTLVGAKLQGRVLIVDDVMSAGTAVRESIALIQAAGATPHAVAIALDRQEKATENGLDVEHSAVQYVTRQLGLQVCAIARLSDLLQYLSEKSDSPSGGETLDGQRLKDHYQSVLAYRERYGVN</sequence>
<name>PYRE_POLNA</name>
<dbReference type="EC" id="2.4.2.10" evidence="1"/>
<dbReference type="EMBL" id="CP000529">
    <property type="protein sequence ID" value="ABM35493.1"/>
    <property type="molecule type" value="Genomic_DNA"/>
</dbReference>
<dbReference type="SMR" id="A1VIL5"/>
<dbReference type="STRING" id="365044.Pnap_0168"/>
<dbReference type="KEGG" id="pna:Pnap_0168"/>
<dbReference type="eggNOG" id="COG0461">
    <property type="taxonomic scope" value="Bacteria"/>
</dbReference>
<dbReference type="HOGENOM" id="CLU_074878_0_1_4"/>
<dbReference type="OrthoDB" id="9779060at2"/>
<dbReference type="UniPathway" id="UPA00070">
    <property type="reaction ID" value="UER00119"/>
</dbReference>
<dbReference type="Proteomes" id="UP000000644">
    <property type="component" value="Chromosome"/>
</dbReference>
<dbReference type="GO" id="GO:0005737">
    <property type="term" value="C:cytoplasm"/>
    <property type="evidence" value="ECO:0007669"/>
    <property type="project" value="TreeGrafter"/>
</dbReference>
<dbReference type="GO" id="GO:0000287">
    <property type="term" value="F:magnesium ion binding"/>
    <property type="evidence" value="ECO:0007669"/>
    <property type="project" value="UniProtKB-UniRule"/>
</dbReference>
<dbReference type="GO" id="GO:0004588">
    <property type="term" value="F:orotate phosphoribosyltransferase activity"/>
    <property type="evidence" value="ECO:0007669"/>
    <property type="project" value="UniProtKB-UniRule"/>
</dbReference>
<dbReference type="GO" id="GO:0006207">
    <property type="term" value="P:'de novo' pyrimidine nucleobase biosynthetic process"/>
    <property type="evidence" value="ECO:0007669"/>
    <property type="project" value="TreeGrafter"/>
</dbReference>
<dbReference type="GO" id="GO:0044205">
    <property type="term" value="P:'de novo' UMP biosynthetic process"/>
    <property type="evidence" value="ECO:0007669"/>
    <property type="project" value="UniProtKB-UniRule"/>
</dbReference>
<dbReference type="GO" id="GO:0046132">
    <property type="term" value="P:pyrimidine ribonucleoside biosynthetic process"/>
    <property type="evidence" value="ECO:0007669"/>
    <property type="project" value="TreeGrafter"/>
</dbReference>
<dbReference type="CDD" id="cd06223">
    <property type="entry name" value="PRTases_typeI"/>
    <property type="match status" value="1"/>
</dbReference>
<dbReference type="FunFam" id="3.40.50.2020:FF:000008">
    <property type="entry name" value="Orotate phosphoribosyltransferase"/>
    <property type="match status" value="1"/>
</dbReference>
<dbReference type="Gene3D" id="3.40.50.2020">
    <property type="match status" value="1"/>
</dbReference>
<dbReference type="HAMAP" id="MF_01208">
    <property type="entry name" value="PyrE"/>
    <property type="match status" value="1"/>
</dbReference>
<dbReference type="InterPro" id="IPR023031">
    <property type="entry name" value="OPRT"/>
</dbReference>
<dbReference type="InterPro" id="IPR004467">
    <property type="entry name" value="Or_phspho_trans_dom"/>
</dbReference>
<dbReference type="InterPro" id="IPR000836">
    <property type="entry name" value="PRibTrfase_dom"/>
</dbReference>
<dbReference type="InterPro" id="IPR029057">
    <property type="entry name" value="PRTase-like"/>
</dbReference>
<dbReference type="NCBIfam" id="TIGR00336">
    <property type="entry name" value="pyrE"/>
    <property type="match status" value="1"/>
</dbReference>
<dbReference type="PANTHER" id="PTHR46683">
    <property type="entry name" value="OROTATE PHOSPHORIBOSYLTRANSFERASE 1-RELATED"/>
    <property type="match status" value="1"/>
</dbReference>
<dbReference type="PANTHER" id="PTHR46683:SF1">
    <property type="entry name" value="OROTATE PHOSPHORIBOSYLTRANSFERASE 1-RELATED"/>
    <property type="match status" value="1"/>
</dbReference>
<dbReference type="Pfam" id="PF00156">
    <property type="entry name" value="Pribosyltran"/>
    <property type="match status" value="1"/>
</dbReference>
<dbReference type="SUPFAM" id="SSF53271">
    <property type="entry name" value="PRTase-like"/>
    <property type="match status" value="1"/>
</dbReference>
<dbReference type="PROSITE" id="PS00103">
    <property type="entry name" value="PUR_PYR_PR_TRANSFER"/>
    <property type="match status" value="1"/>
</dbReference>
<feature type="chain" id="PRO_1000066266" description="Orotate phosphoribosyltransferase">
    <location>
        <begin position="1"/>
        <end position="237"/>
    </location>
</feature>
<feature type="binding site" description="in other chain" evidence="1">
    <location>
        <position position="29"/>
    </location>
    <ligand>
        <name>5-phospho-alpha-D-ribose 1-diphosphate</name>
        <dbReference type="ChEBI" id="CHEBI:58017"/>
        <note>ligand shared between dimeric partners</note>
    </ligand>
</feature>
<feature type="binding site" evidence="1">
    <location>
        <begin position="37"/>
        <end position="38"/>
    </location>
    <ligand>
        <name>orotate</name>
        <dbReference type="ChEBI" id="CHEBI:30839"/>
    </ligand>
</feature>
<feature type="binding site" description="in other chain" evidence="1">
    <location>
        <begin position="79"/>
        <end position="80"/>
    </location>
    <ligand>
        <name>5-phospho-alpha-D-ribose 1-diphosphate</name>
        <dbReference type="ChEBI" id="CHEBI:58017"/>
        <note>ligand shared between dimeric partners</note>
    </ligand>
</feature>
<feature type="binding site" evidence="1">
    <location>
        <position position="105"/>
    </location>
    <ligand>
        <name>5-phospho-alpha-D-ribose 1-diphosphate</name>
        <dbReference type="ChEBI" id="CHEBI:58017"/>
        <note>ligand shared between dimeric partners</note>
    </ligand>
</feature>
<feature type="binding site" description="in other chain" evidence="1">
    <location>
        <position position="106"/>
    </location>
    <ligand>
        <name>5-phospho-alpha-D-ribose 1-diphosphate</name>
        <dbReference type="ChEBI" id="CHEBI:58017"/>
        <note>ligand shared between dimeric partners</note>
    </ligand>
</feature>
<feature type="binding site" evidence="1">
    <location>
        <position position="109"/>
    </location>
    <ligand>
        <name>5-phospho-alpha-D-ribose 1-diphosphate</name>
        <dbReference type="ChEBI" id="CHEBI:58017"/>
        <note>ligand shared between dimeric partners</note>
    </ligand>
</feature>
<feature type="binding site" evidence="1">
    <location>
        <position position="111"/>
    </location>
    <ligand>
        <name>5-phospho-alpha-D-ribose 1-diphosphate</name>
        <dbReference type="ChEBI" id="CHEBI:58017"/>
        <note>ligand shared between dimeric partners</note>
    </ligand>
</feature>
<feature type="binding site" description="in other chain" evidence="1">
    <location>
        <begin position="130"/>
        <end position="138"/>
    </location>
    <ligand>
        <name>5-phospho-alpha-D-ribose 1-diphosphate</name>
        <dbReference type="ChEBI" id="CHEBI:58017"/>
        <note>ligand shared between dimeric partners</note>
    </ligand>
</feature>
<feature type="binding site" evidence="1">
    <location>
        <position position="134"/>
    </location>
    <ligand>
        <name>orotate</name>
        <dbReference type="ChEBI" id="CHEBI:30839"/>
    </ligand>
</feature>
<feature type="binding site" evidence="1">
    <location>
        <position position="162"/>
    </location>
    <ligand>
        <name>orotate</name>
        <dbReference type="ChEBI" id="CHEBI:30839"/>
    </ligand>
</feature>
<evidence type="ECO:0000255" key="1">
    <source>
        <dbReference type="HAMAP-Rule" id="MF_01208"/>
    </source>
</evidence>
<proteinExistence type="inferred from homology"/>